<accession>Q8X0J4</accession>
<accession>Q7S7V5</accession>
<organism>
    <name type="scientific">Neurospora crassa (strain ATCC 24698 / 74-OR23-1A / CBS 708.71 / DSM 1257 / FGSC 987)</name>
    <dbReference type="NCBI Taxonomy" id="367110"/>
    <lineage>
        <taxon>Eukaryota</taxon>
        <taxon>Fungi</taxon>
        <taxon>Dikarya</taxon>
        <taxon>Ascomycota</taxon>
        <taxon>Pezizomycotina</taxon>
        <taxon>Sordariomycetes</taxon>
        <taxon>Sordariomycetidae</taxon>
        <taxon>Sordariales</taxon>
        <taxon>Sordariaceae</taxon>
        <taxon>Neurospora</taxon>
    </lineage>
</organism>
<name>CYB5L_NEUCR</name>
<feature type="chain" id="PRO_0000166031" description="Putative cytochrome b5 B11H24.095">
    <location>
        <begin position="1"/>
        <end position="83"/>
    </location>
</feature>
<feature type="domain" description="Cytochrome b5 heme-binding" evidence="1">
    <location>
        <begin position="2"/>
        <end position="78"/>
    </location>
</feature>
<feature type="binding site" description="axial binding residue" evidence="1">
    <location>
        <position position="37"/>
    </location>
    <ligand>
        <name>heme</name>
        <dbReference type="ChEBI" id="CHEBI:30413"/>
    </ligand>
    <ligandPart>
        <name>Fe</name>
        <dbReference type="ChEBI" id="CHEBI:18248"/>
    </ligandPart>
</feature>
<feature type="binding site" description="axial binding residue" evidence="1">
    <location>
        <position position="60"/>
    </location>
    <ligand>
        <name>heme</name>
        <dbReference type="ChEBI" id="CHEBI:30413"/>
    </ligand>
    <ligandPart>
        <name>Fe</name>
        <dbReference type="ChEBI" id="CHEBI:18248"/>
    </ligandPart>
</feature>
<sequence length="83" mass="9282">MSQTFTKSQVAEHKDDKSMYIIIDDGVYDITNFLDDHPGGAKILKRMAGKDATKSFWKYHGKSVLEKYGTKLKVGTLAEAAKL</sequence>
<reference key="1">
    <citation type="journal article" date="2003" name="Nucleic Acids Res.">
        <title>What's in the genome of a filamentous fungus? Analysis of the Neurospora genome sequence.</title>
        <authorList>
            <person name="Mannhaupt G."/>
            <person name="Montrone C."/>
            <person name="Haase D."/>
            <person name="Mewes H.-W."/>
            <person name="Aign V."/>
            <person name="Hoheisel J.D."/>
            <person name="Fartmann B."/>
            <person name="Nyakatura G."/>
            <person name="Kempken F."/>
            <person name="Maier J."/>
            <person name="Schulte U."/>
        </authorList>
    </citation>
    <scope>NUCLEOTIDE SEQUENCE [LARGE SCALE GENOMIC DNA]</scope>
    <source>
        <strain>ATCC 24698 / 74-OR23-1A / CBS 708.71 / DSM 1257 / FGSC 987</strain>
    </source>
</reference>
<reference key="2">
    <citation type="journal article" date="2003" name="Nature">
        <title>The genome sequence of the filamentous fungus Neurospora crassa.</title>
        <authorList>
            <person name="Galagan J.E."/>
            <person name="Calvo S.E."/>
            <person name="Borkovich K.A."/>
            <person name="Selker E.U."/>
            <person name="Read N.D."/>
            <person name="Jaffe D.B."/>
            <person name="FitzHugh W."/>
            <person name="Ma L.-J."/>
            <person name="Smirnov S."/>
            <person name="Purcell S."/>
            <person name="Rehman B."/>
            <person name="Elkins T."/>
            <person name="Engels R."/>
            <person name="Wang S."/>
            <person name="Nielsen C.B."/>
            <person name="Butler J."/>
            <person name="Endrizzi M."/>
            <person name="Qui D."/>
            <person name="Ianakiev P."/>
            <person name="Bell-Pedersen D."/>
            <person name="Nelson M.A."/>
            <person name="Werner-Washburne M."/>
            <person name="Selitrennikoff C.P."/>
            <person name="Kinsey J.A."/>
            <person name="Braun E.L."/>
            <person name="Zelter A."/>
            <person name="Schulte U."/>
            <person name="Kothe G.O."/>
            <person name="Jedd G."/>
            <person name="Mewes H.-W."/>
            <person name="Staben C."/>
            <person name="Marcotte E."/>
            <person name="Greenberg D."/>
            <person name="Roy A."/>
            <person name="Foley K."/>
            <person name="Naylor J."/>
            <person name="Stange-Thomann N."/>
            <person name="Barrett R."/>
            <person name="Gnerre S."/>
            <person name="Kamal M."/>
            <person name="Kamvysselis M."/>
            <person name="Mauceli E.W."/>
            <person name="Bielke C."/>
            <person name="Rudd S."/>
            <person name="Frishman D."/>
            <person name="Krystofova S."/>
            <person name="Rasmussen C."/>
            <person name="Metzenberg R.L."/>
            <person name="Perkins D.D."/>
            <person name="Kroken S."/>
            <person name="Cogoni C."/>
            <person name="Macino G."/>
            <person name="Catcheside D.E.A."/>
            <person name="Li W."/>
            <person name="Pratt R.J."/>
            <person name="Osmani S.A."/>
            <person name="DeSouza C.P.C."/>
            <person name="Glass N.L."/>
            <person name="Orbach M.J."/>
            <person name="Berglund J.A."/>
            <person name="Voelker R."/>
            <person name="Yarden O."/>
            <person name="Plamann M."/>
            <person name="Seiler S."/>
            <person name="Dunlap J.C."/>
            <person name="Radford A."/>
            <person name="Aramayo R."/>
            <person name="Natvig D.O."/>
            <person name="Alex L.A."/>
            <person name="Mannhaupt G."/>
            <person name="Ebbole D.J."/>
            <person name="Freitag M."/>
            <person name="Paulsen I."/>
            <person name="Sachs M.S."/>
            <person name="Lander E.S."/>
            <person name="Nusbaum C."/>
            <person name="Birren B.W."/>
        </authorList>
    </citation>
    <scope>NUCLEOTIDE SEQUENCE [LARGE SCALE GENOMIC DNA]</scope>
    <source>
        <strain>ATCC 24698 / 74-OR23-1A / CBS 708.71 / DSM 1257 / FGSC 987</strain>
    </source>
</reference>
<proteinExistence type="inferred from homology"/>
<comment type="similarity">
    <text evidence="2">Belongs to the cytochrome b5 family.</text>
</comment>
<protein>
    <recommendedName>
        <fullName>Putative cytochrome b5 B11H24.095</fullName>
    </recommendedName>
</protein>
<gene>
    <name type="ORF">B11H24.095</name>
    <name type="ORF">NCU03603</name>
</gene>
<dbReference type="EMBL" id="AL670005">
    <property type="protein sequence ID" value="CAD21279.1"/>
    <property type="molecule type" value="Genomic_DNA"/>
</dbReference>
<dbReference type="EMBL" id="CM002240">
    <property type="protein sequence ID" value="EAA32094.1"/>
    <property type="molecule type" value="Genomic_DNA"/>
</dbReference>
<dbReference type="RefSeq" id="XP_961330.1">
    <property type="nucleotide sequence ID" value="XM_956237.2"/>
</dbReference>
<dbReference type="SMR" id="Q8X0J4"/>
<dbReference type="STRING" id="367110.Q8X0J4"/>
<dbReference type="PaxDb" id="5141-EFNCRP00000003489"/>
<dbReference type="EnsemblFungi" id="EAA32094">
    <property type="protein sequence ID" value="EAA32094"/>
    <property type="gene ID" value="NCU03603"/>
</dbReference>
<dbReference type="GeneID" id="3877512"/>
<dbReference type="KEGG" id="ncr:NCU03603"/>
<dbReference type="VEuPathDB" id="FungiDB:NCU03603"/>
<dbReference type="HOGENOM" id="CLU_102602_4_4_1"/>
<dbReference type="InParanoid" id="Q8X0J4"/>
<dbReference type="OMA" id="FWKYHGD"/>
<dbReference type="OrthoDB" id="260519at2759"/>
<dbReference type="Proteomes" id="UP000001805">
    <property type="component" value="Chromosome 2, Linkage Group V"/>
</dbReference>
<dbReference type="GO" id="GO:0043231">
    <property type="term" value="C:intracellular membrane-bounded organelle"/>
    <property type="evidence" value="ECO:0000318"/>
    <property type="project" value="GO_Central"/>
</dbReference>
<dbReference type="GO" id="GO:0016020">
    <property type="term" value="C:membrane"/>
    <property type="evidence" value="ECO:0000318"/>
    <property type="project" value="GO_Central"/>
</dbReference>
<dbReference type="GO" id="GO:0020037">
    <property type="term" value="F:heme binding"/>
    <property type="evidence" value="ECO:0000318"/>
    <property type="project" value="GO_Central"/>
</dbReference>
<dbReference type="GO" id="GO:0046872">
    <property type="term" value="F:metal ion binding"/>
    <property type="evidence" value="ECO:0007669"/>
    <property type="project" value="UniProtKB-KW"/>
</dbReference>
<dbReference type="FunFam" id="3.10.120.10:FF:000007">
    <property type="entry name" value="Sulfite oxidase, mitochondrial"/>
    <property type="match status" value="1"/>
</dbReference>
<dbReference type="Gene3D" id="3.10.120.10">
    <property type="entry name" value="Cytochrome b5-like heme/steroid binding domain"/>
    <property type="match status" value="1"/>
</dbReference>
<dbReference type="InterPro" id="IPR001199">
    <property type="entry name" value="Cyt_B5-like_heme/steroid-bd"/>
</dbReference>
<dbReference type="InterPro" id="IPR036400">
    <property type="entry name" value="Cyt_B5-like_heme/steroid_sf"/>
</dbReference>
<dbReference type="InterPro" id="IPR018506">
    <property type="entry name" value="Cyt_B5_heme-BS"/>
</dbReference>
<dbReference type="InterPro" id="IPR050668">
    <property type="entry name" value="Cytochrome_b5"/>
</dbReference>
<dbReference type="PANTHER" id="PTHR19359">
    <property type="entry name" value="CYTOCHROME B5"/>
    <property type="match status" value="1"/>
</dbReference>
<dbReference type="PANTHER" id="PTHR19359:SF14">
    <property type="entry name" value="CYTOCHROME B5 A"/>
    <property type="match status" value="1"/>
</dbReference>
<dbReference type="Pfam" id="PF00173">
    <property type="entry name" value="Cyt-b5"/>
    <property type="match status" value="1"/>
</dbReference>
<dbReference type="PRINTS" id="PR00363">
    <property type="entry name" value="CYTOCHROMEB5"/>
</dbReference>
<dbReference type="SMART" id="SM01117">
    <property type="entry name" value="Cyt-b5"/>
    <property type="match status" value="1"/>
</dbReference>
<dbReference type="SUPFAM" id="SSF55856">
    <property type="entry name" value="Cytochrome b5-like heme/steroid binding domain"/>
    <property type="match status" value="1"/>
</dbReference>
<dbReference type="PROSITE" id="PS00191">
    <property type="entry name" value="CYTOCHROME_B5_1"/>
    <property type="match status" value="1"/>
</dbReference>
<dbReference type="PROSITE" id="PS50255">
    <property type="entry name" value="CYTOCHROME_B5_2"/>
    <property type="match status" value="1"/>
</dbReference>
<keyword id="KW-0249">Electron transport</keyword>
<keyword id="KW-0349">Heme</keyword>
<keyword id="KW-0408">Iron</keyword>
<keyword id="KW-0479">Metal-binding</keyword>
<keyword id="KW-1185">Reference proteome</keyword>
<keyword id="KW-0813">Transport</keyword>
<evidence type="ECO:0000255" key="1">
    <source>
        <dbReference type="PROSITE-ProRule" id="PRU00279"/>
    </source>
</evidence>
<evidence type="ECO:0000305" key="2"/>